<keyword id="KW-0058">Aromatic hydrocarbons catabolism</keyword>
<keyword id="KW-0456">Lyase</keyword>
<keyword id="KW-0464">Manganese</keyword>
<keyword id="KW-0479">Metal-binding</keyword>
<sequence>MRRNSERPVRITEVCLRDGSHVMKHQFTEEQVRSVTRTLDEAGMHYIEVSHGDGLGGSTLQYGKSLVNEMKLIEAAVDECKQAKVAVLLIPGIGTIHELKQAANIGAKLVRVATHVTEADVSAQHIQFARELGMEVCGFLMMAHSASVEKLVEQAKLMESYGAEAVYVTDSAGALLPHEVRERIRALRQSLNIEIGFHGHNNLSVAVANTITAIEEGATRIDGSVRCLGAGAGNAQTEVLLAVLDRMGYKLDIDLYKMMDVAEEGVAPLLPVPQEIQKGSLVMGYAGVYSSFLLHAERAAQRFNVDARDILIELGKRKVVGGQEDMILDVAAELAKIKMEV</sequence>
<evidence type="ECO:0000255" key="1">
    <source>
        <dbReference type="HAMAP-Rule" id="MF_01656"/>
    </source>
</evidence>
<gene>
    <name type="ordered locus">BCE_2157</name>
</gene>
<comment type="catalytic activity">
    <reaction evidence="1">
        <text>(S)-4-hydroxy-2-oxopentanoate = acetaldehyde + pyruvate</text>
        <dbReference type="Rhea" id="RHEA:22624"/>
        <dbReference type="ChEBI" id="CHEBI:15343"/>
        <dbReference type="ChEBI" id="CHEBI:15361"/>
        <dbReference type="ChEBI" id="CHEBI:73143"/>
        <dbReference type="EC" id="4.1.3.39"/>
    </reaction>
</comment>
<comment type="similarity">
    <text evidence="1">Belongs to the 4-hydroxy-2-oxovalerate aldolase family.</text>
</comment>
<reference key="1">
    <citation type="journal article" date="2004" name="Nucleic Acids Res.">
        <title>The genome sequence of Bacillus cereus ATCC 10987 reveals metabolic adaptations and a large plasmid related to Bacillus anthracis pXO1.</title>
        <authorList>
            <person name="Rasko D.A."/>
            <person name="Ravel J."/>
            <person name="Oekstad O.A."/>
            <person name="Helgason E."/>
            <person name="Cer R.Z."/>
            <person name="Jiang L."/>
            <person name="Shores K.A."/>
            <person name="Fouts D.E."/>
            <person name="Tourasse N.J."/>
            <person name="Angiuoli S.V."/>
            <person name="Kolonay J.F."/>
            <person name="Nelson W.C."/>
            <person name="Kolstoe A.-B."/>
            <person name="Fraser C.M."/>
            <person name="Read T.D."/>
        </authorList>
    </citation>
    <scope>NUCLEOTIDE SEQUENCE [LARGE SCALE GENOMIC DNA]</scope>
    <source>
        <strain>ATCC 10987 / NRS 248</strain>
    </source>
</reference>
<feature type="chain" id="PRO_0000387788" description="4-hydroxy-2-oxovalerate aldolase">
    <location>
        <begin position="1"/>
        <end position="341"/>
    </location>
</feature>
<feature type="domain" description="Pyruvate carboxyltransferase" evidence="1">
    <location>
        <begin position="9"/>
        <end position="259"/>
    </location>
</feature>
<feature type="active site" description="Proton acceptor" evidence="1">
    <location>
        <position position="21"/>
    </location>
</feature>
<feature type="binding site" evidence="1">
    <location>
        <begin position="17"/>
        <end position="18"/>
    </location>
    <ligand>
        <name>substrate</name>
    </ligand>
</feature>
<feature type="binding site" evidence="1">
    <location>
        <position position="18"/>
    </location>
    <ligand>
        <name>Mn(2+)</name>
        <dbReference type="ChEBI" id="CHEBI:29035"/>
    </ligand>
</feature>
<feature type="binding site" evidence="1">
    <location>
        <position position="171"/>
    </location>
    <ligand>
        <name>substrate</name>
    </ligand>
</feature>
<feature type="binding site" evidence="1">
    <location>
        <position position="198"/>
    </location>
    <ligand>
        <name>Mn(2+)</name>
        <dbReference type="ChEBI" id="CHEBI:29035"/>
    </ligand>
</feature>
<feature type="binding site" evidence="1">
    <location>
        <position position="198"/>
    </location>
    <ligand>
        <name>substrate</name>
    </ligand>
</feature>
<feature type="binding site" evidence="1">
    <location>
        <position position="200"/>
    </location>
    <ligand>
        <name>Mn(2+)</name>
        <dbReference type="ChEBI" id="CHEBI:29035"/>
    </ligand>
</feature>
<feature type="binding site" evidence="1">
    <location>
        <position position="289"/>
    </location>
    <ligand>
        <name>substrate</name>
    </ligand>
</feature>
<feature type="site" description="Transition state stabilizer" evidence="1">
    <location>
        <position position="17"/>
    </location>
</feature>
<organism>
    <name type="scientific">Bacillus cereus (strain ATCC 10987 / NRS 248)</name>
    <dbReference type="NCBI Taxonomy" id="222523"/>
    <lineage>
        <taxon>Bacteria</taxon>
        <taxon>Bacillati</taxon>
        <taxon>Bacillota</taxon>
        <taxon>Bacilli</taxon>
        <taxon>Bacillales</taxon>
        <taxon>Bacillaceae</taxon>
        <taxon>Bacillus</taxon>
        <taxon>Bacillus cereus group</taxon>
    </lineage>
</organism>
<dbReference type="EC" id="4.1.3.39" evidence="1"/>
<dbReference type="EMBL" id="AE017194">
    <property type="protein sequence ID" value="AAS41078.1"/>
    <property type="molecule type" value="Genomic_DNA"/>
</dbReference>
<dbReference type="SMR" id="Q739I4"/>
<dbReference type="KEGG" id="bca:BCE_2157"/>
<dbReference type="HOGENOM" id="CLU_049173_0_0_9"/>
<dbReference type="Proteomes" id="UP000002527">
    <property type="component" value="Chromosome"/>
</dbReference>
<dbReference type="GO" id="GO:0003852">
    <property type="term" value="F:2-isopropylmalate synthase activity"/>
    <property type="evidence" value="ECO:0007669"/>
    <property type="project" value="TreeGrafter"/>
</dbReference>
<dbReference type="GO" id="GO:0008701">
    <property type="term" value="F:4-hydroxy-2-oxovalerate aldolase activity"/>
    <property type="evidence" value="ECO:0007669"/>
    <property type="project" value="UniProtKB-UniRule"/>
</dbReference>
<dbReference type="GO" id="GO:0030145">
    <property type="term" value="F:manganese ion binding"/>
    <property type="evidence" value="ECO:0007669"/>
    <property type="project" value="UniProtKB-UniRule"/>
</dbReference>
<dbReference type="GO" id="GO:0009056">
    <property type="term" value="P:catabolic process"/>
    <property type="evidence" value="ECO:0007669"/>
    <property type="project" value="UniProtKB-KW"/>
</dbReference>
<dbReference type="GO" id="GO:0009098">
    <property type="term" value="P:L-leucine biosynthetic process"/>
    <property type="evidence" value="ECO:0007669"/>
    <property type="project" value="TreeGrafter"/>
</dbReference>
<dbReference type="CDD" id="cd07943">
    <property type="entry name" value="DRE_TIM_HOA"/>
    <property type="match status" value="1"/>
</dbReference>
<dbReference type="Gene3D" id="1.10.8.60">
    <property type="match status" value="1"/>
</dbReference>
<dbReference type="Gene3D" id="3.20.20.70">
    <property type="entry name" value="Aldolase class I"/>
    <property type="match status" value="1"/>
</dbReference>
<dbReference type="HAMAP" id="MF_01656">
    <property type="entry name" value="HOA"/>
    <property type="match status" value="1"/>
</dbReference>
<dbReference type="InterPro" id="IPR050073">
    <property type="entry name" value="2-IPM_HCS-like"/>
</dbReference>
<dbReference type="InterPro" id="IPR017629">
    <property type="entry name" value="4OH_2_O-val_aldolase"/>
</dbReference>
<dbReference type="InterPro" id="IPR013785">
    <property type="entry name" value="Aldolase_TIM"/>
</dbReference>
<dbReference type="InterPro" id="IPR012425">
    <property type="entry name" value="DmpG_comm"/>
</dbReference>
<dbReference type="InterPro" id="IPR035685">
    <property type="entry name" value="DRE_TIM_HOA"/>
</dbReference>
<dbReference type="InterPro" id="IPR000891">
    <property type="entry name" value="PYR_CT"/>
</dbReference>
<dbReference type="NCBIfam" id="TIGR03217">
    <property type="entry name" value="4OH_2_O_val_ald"/>
    <property type="match status" value="1"/>
</dbReference>
<dbReference type="NCBIfam" id="NF006049">
    <property type="entry name" value="PRK08195.1"/>
    <property type="match status" value="1"/>
</dbReference>
<dbReference type="PANTHER" id="PTHR10277:SF9">
    <property type="entry name" value="2-ISOPROPYLMALATE SYNTHASE 1, CHLOROPLASTIC-RELATED"/>
    <property type="match status" value="1"/>
</dbReference>
<dbReference type="PANTHER" id="PTHR10277">
    <property type="entry name" value="HOMOCITRATE SYNTHASE-RELATED"/>
    <property type="match status" value="1"/>
</dbReference>
<dbReference type="Pfam" id="PF07836">
    <property type="entry name" value="DmpG_comm"/>
    <property type="match status" value="1"/>
</dbReference>
<dbReference type="Pfam" id="PF00682">
    <property type="entry name" value="HMGL-like"/>
    <property type="match status" value="1"/>
</dbReference>
<dbReference type="SUPFAM" id="SSF51569">
    <property type="entry name" value="Aldolase"/>
    <property type="match status" value="1"/>
</dbReference>
<dbReference type="SUPFAM" id="SSF89000">
    <property type="entry name" value="post-HMGL domain-like"/>
    <property type="match status" value="1"/>
</dbReference>
<dbReference type="PROSITE" id="PS50991">
    <property type="entry name" value="PYR_CT"/>
    <property type="match status" value="1"/>
</dbReference>
<accession>Q739I4</accession>
<proteinExistence type="inferred from homology"/>
<name>HOA_BACC1</name>
<protein>
    <recommendedName>
        <fullName evidence="1">4-hydroxy-2-oxovalerate aldolase</fullName>
        <shortName evidence="1">HOA</shortName>
        <ecNumber evidence="1">4.1.3.39</ecNumber>
    </recommendedName>
    <alternativeName>
        <fullName evidence="1">4-hydroxy-2-keto-pentanoic acid aldolase</fullName>
    </alternativeName>
    <alternativeName>
        <fullName evidence="1">4-hydroxy-2-oxopentanoate aldolase</fullName>
    </alternativeName>
</protein>